<reference key="1">
    <citation type="submission" date="2004-11" db="EMBL/GenBank/DDBJ databases">
        <authorList>
            <consortium name="The German cDNA consortium"/>
        </authorList>
    </citation>
    <scope>NUCLEOTIDE SEQUENCE [LARGE SCALE MRNA]</scope>
    <source>
        <tissue>Kidney</tissue>
    </source>
</reference>
<dbReference type="EMBL" id="CR857132">
    <property type="protein sequence ID" value="CAH89434.1"/>
    <property type="molecule type" value="mRNA"/>
</dbReference>
<dbReference type="RefSeq" id="NP_001124609.1">
    <property type="nucleotide sequence ID" value="NM_001131137.1"/>
</dbReference>
<dbReference type="SMR" id="Q5RFM3"/>
<dbReference type="STRING" id="9601.ENSPPYP00000018580"/>
<dbReference type="GeneID" id="100171446"/>
<dbReference type="KEGG" id="pon:100171446"/>
<dbReference type="CTD" id="55173"/>
<dbReference type="eggNOG" id="KOG3321">
    <property type="taxonomic scope" value="Eukaryota"/>
</dbReference>
<dbReference type="InParanoid" id="Q5RFM3"/>
<dbReference type="OrthoDB" id="366214at2759"/>
<dbReference type="Proteomes" id="UP000001595">
    <property type="component" value="Unplaced"/>
</dbReference>
<dbReference type="GO" id="GO:0005763">
    <property type="term" value="C:mitochondrial small ribosomal subunit"/>
    <property type="evidence" value="ECO:0000250"/>
    <property type="project" value="UniProtKB"/>
</dbReference>
<dbReference type="FunFam" id="3.30.70.600:FF:000005">
    <property type="entry name" value="28S ribosomal protein S10, mitochondrial"/>
    <property type="match status" value="1"/>
</dbReference>
<dbReference type="Gene3D" id="3.30.70.600">
    <property type="entry name" value="Ribosomal protein S10 domain"/>
    <property type="match status" value="1"/>
</dbReference>
<dbReference type="InterPro" id="IPR027486">
    <property type="entry name" value="Ribosomal_uS10_dom"/>
</dbReference>
<dbReference type="InterPro" id="IPR036838">
    <property type="entry name" value="Ribosomal_uS10_dom_sf"/>
</dbReference>
<dbReference type="InterPro" id="IPR040055">
    <property type="entry name" value="Ribosomal_uS10m"/>
</dbReference>
<dbReference type="PANTHER" id="PTHR13334">
    <property type="entry name" value="MITOCHONDRIAL 28S RIBOSOMAL PROTEIN S10"/>
    <property type="match status" value="1"/>
</dbReference>
<dbReference type="PANTHER" id="PTHR13334:SF4">
    <property type="entry name" value="SMALL RIBOSOMAL SUBUNIT PROTEIN US10M"/>
    <property type="match status" value="1"/>
</dbReference>
<dbReference type="Pfam" id="PF00338">
    <property type="entry name" value="Ribosomal_S10"/>
    <property type="match status" value="1"/>
</dbReference>
<dbReference type="SMART" id="SM01403">
    <property type="entry name" value="Ribosomal_S10"/>
    <property type="match status" value="1"/>
</dbReference>
<dbReference type="SUPFAM" id="SSF54999">
    <property type="entry name" value="Ribosomal protein S10"/>
    <property type="match status" value="1"/>
</dbReference>
<organism>
    <name type="scientific">Pongo abelii</name>
    <name type="common">Sumatran orangutan</name>
    <name type="synonym">Pongo pygmaeus abelii</name>
    <dbReference type="NCBI Taxonomy" id="9601"/>
    <lineage>
        <taxon>Eukaryota</taxon>
        <taxon>Metazoa</taxon>
        <taxon>Chordata</taxon>
        <taxon>Craniata</taxon>
        <taxon>Vertebrata</taxon>
        <taxon>Euteleostomi</taxon>
        <taxon>Mammalia</taxon>
        <taxon>Eutheria</taxon>
        <taxon>Euarchontoglires</taxon>
        <taxon>Primates</taxon>
        <taxon>Haplorrhini</taxon>
        <taxon>Catarrhini</taxon>
        <taxon>Hominidae</taxon>
        <taxon>Pongo</taxon>
    </lineage>
</organism>
<comment type="subunit">
    <text evidence="1">Component of the mitochondrial ribosome small subunit (28S) which comprises a 12S rRNA and about 30 distinct proteins.</text>
</comment>
<comment type="subcellular location">
    <subcellularLocation>
        <location evidence="1">Mitochondrion</location>
    </subcellularLocation>
</comment>
<comment type="similarity">
    <text evidence="2">Belongs to the universal ribosomal protein uS10 family.</text>
</comment>
<sequence>MAARTAFGAVCRRLWQGLGNFSVNTSKGNTAKNGGFLLSTNMKWVQFSNLHVDVPKDLTKPVITISDEPDILYKRLSVLVKGHDKAVLDSYGYFAVLAAKELGISIKVHEPPRKIERFTLLQSVHIYKKHRVQYEMRTLYRCLELEHLTGSTADVYLEYIQRNLPEGVAMEVTKTQLEQLPEHIKEPIWETLSEEKEESKS</sequence>
<proteinExistence type="evidence at transcript level"/>
<protein>
    <recommendedName>
        <fullName evidence="2">Small ribosomal subunit protein uS10m</fullName>
    </recommendedName>
    <alternativeName>
        <fullName>28S ribosomal protein S10, mitochondrial</fullName>
        <shortName>MRP-S10</shortName>
        <shortName>S10mt</shortName>
    </alternativeName>
</protein>
<feature type="chain" id="PRO_0000146677" description="Small ribosomal subunit protein uS10m">
    <location>
        <begin position="1"/>
        <end position="201"/>
    </location>
</feature>
<gene>
    <name type="primary">MRPS10</name>
</gene>
<keyword id="KW-0496">Mitochondrion</keyword>
<keyword id="KW-1185">Reference proteome</keyword>
<keyword id="KW-0687">Ribonucleoprotein</keyword>
<keyword id="KW-0689">Ribosomal protein</keyword>
<accession>Q5RFM3</accession>
<name>RT10_PONAB</name>
<evidence type="ECO:0000250" key="1">
    <source>
        <dbReference type="UniProtKB" id="P82664"/>
    </source>
</evidence>
<evidence type="ECO:0000305" key="2"/>